<proteinExistence type="inferred from homology"/>
<comment type="function">
    <text evidence="1">Catalyzes the phosphorylation of the 3'-hydroxyl group of dephosphocoenzyme A to form coenzyme A.</text>
</comment>
<comment type="catalytic activity">
    <reaction evidence="1">
        <text>3'-dephospho-CoA + ATP = ADP + CoA + H(+)</text>
        <dbReference type="Rhea" id="RHEA:18245"/>
        <dbReference type="ChEBI" id="CHEBI:15378"/>
        <dbReference type="ChEBI" id="CHEBI:30616"/>
        <dbReference type="ChEBI" id="CHEBI:57287"/>
        <dbReference type="ChEBI" id="CHEBI:57328"/>
        <dbReference type="ChEBI" id="CHEBI:456216"/>
        <dbReference type="EC" id="2.7.1.24"/>
    </reaction>
</comment>
<comment type="pathway">
    <text evidence="1">Cofactor biosynthesis; coenzyme A biosynthesis; CoA from (R)-pantothenate: step 5/5.</text>
</comment>
<comment type="subcellular location">
    <subcellularLocation>
        <location evidence="1">Cytoplasm</location>
    </subcellularLocation>
</comment>
<comment type="similarity">
    <text evidence="1">Belongs to the CoaE family.</text>
</comment>
<evidence type="ECO:0000255" key="1">
    <source>
        <dbReference type="HAMAP-Rule" id="MF_00376"/>
    </source>
</evidence>
<keyword id="KW-0067">ATP-binding</keyword>
<keyword id="KW-0173">Coenzyme A biosynthesis</keyword>
<keyword id="KW-0963">Cytoplasm</keyword>
<keyword id="KW-0418">Kinase</keyword>
<keyword id="KW-0547">Nucleotide-binding</keyword>
<keyword id="KW-0808">Transferase</keyword>
<feature type="chain" id="PRO_0000243304" description="Dephospho-CoA kinase">
    <location>
        <begin position="1"/>
        <end position="214"/>
    </location>
</feature>
<feature type="domain" description="DPCK" evidence="1">
    <location>
        <begin position="4"/>
        <end position="204"/>
    </location>
</feature>
<feature type="binding site" evidence="1">
    <location>
        <begin position="12"/>
        <end position="17"/>
    </location>
    <ligand>
        <name>ATP</name>
        <dbReference type="ChEBI" id="CHEBI:30616"/>
    </ligand>
</feature>
<accession>Q65VP4</accession>
<gene>
    <name evidence="1" type="primary">coaE</name>
    <name type="ordered locus">MS0359</name>
</gene>
<reference key="1">
    <citation type="journal article" date="2004" name="Nat. Biotechnol.">
        <title>The genome sequence of the capnophilic rumen bacterium Mannheimia succiniciproducens.</title>
        <authorList>
            <person name="Hong S.H."/>
            <person name="Kim J.S."/>
            <person name="Lee S.Y."/>
            <person name="In Y.H."/>
            <person name="Choi S.S."/>
            <person name="Rih J.-K."/>
            <person name="Kim C.H."/>
            <person name="Jeong H."/>
            <person name="Hur C.G."/>
            <person name="Kim J.J."/>
        </authorList>
    </citation>
    <scope>NUCLEOTIDE SEQUENCE [LARGE SCALE GENOMIC DNA]</scope>
    <source>
        <strain>KCTC 0769BP / MBEL55E</strain>
    </source>
</reference>
<protein>
    <recommendedName>
        <fullName evidence="1">Dephospho-CoA kinase</fullName>
        <ecNumber evidence="1">2.7.1.24</ecNumber>
    </recommendedName>
    <alternativeName>
        <fullName evidence="1">Dephosphocoenzyme A kinase</fullName>
    </alternativeName>
</protein>
<sequence length="214" mass="24369">MAYIVGLTGGIGSGKSTIADLFMELGVPVVDADEVSRRLVEKGSPLLSKIATHFGADILTNGGELNRSKLREIIFNRPEQKNWLNALLHPAINEEMQRQLQAQQAPYVLFVVPLLIENNLMSLCDRILIIDVSPQTQLERATKRDKNQRELIQQIMNSQVSREKRLTFADDIINNDEDFAQNGDRIKQKVLELHQRYLQLAQQKSSTYDNKNDR</sequence>
<name>COAE_MANSM</name>
<dbReference type="EC" id="2.7.1.24" evidence="1"/>
<dbReference type="EMBL" id="AE016827">
    <property type="protein sequence ID" value="AAU36966.1"/>
    <property type="molecule type" value="Genomic_DNA"/>
</dbReference>
<dbReference type="RefSeq" id="WP_011199541.1">
    <property type="nucleotide sequence ID" value="NC_006300.1"/>
</dbReference>
<dbReference type="SMR" id="Q65VP4"/>
<dbReference type="STRING" id="221988.MS0359"/>
<dbReference type="KEGG" id="msu:MS0359"/>
<dbReference type="eggNOG" id="COG0237">
    <property type="taxonomic scope" value="Bacteria"/>
</dbReference>
<dbReference type="HOGENOM" id="CLU_057180_1_2_6"/>
<dbReference type="OrthoDB" id="9812943at2"/>
<dbReference type="UniPathway" id="UPA00241">
    <property type="reaction ID" value="UER00356"/>
</dbReference>
<dbReference type="Proteomes" id="UP000000607">
    <property type="component" value="Chromosome"/>
</dbReference>
<dbReference type="GO" id="GO:0005737">
    <property type="term" value="C:cytoplasm"/>
    <property type="evidence" value="ECO:0007669"/>
    <property type="project" value="UniProtKB-SubCell"/>
</dbReference>
<dbReference type="GO" id="GO:0005524">
    <property type="term" value="F:ATP binding"/>
    <property type="evidence" value="ECO:0007669"/>
    <property type="project" value="UniProtKB-UniRule"/>
</dbReference>
<dbReference type="GO" id="GO:0004140">
    <property type="term" value="F:dephospho-CoA kinase activity"/>
    <property type="evidence" value="ECO:0007669"/>
    <property type="project" value="UniProtKB-UniRule"/>
</dbReference>
<dbReference type="GO" id="GO:0015937">
    <property type="term" value="P:coenzyme A biosynthetic process"/>
    <property type="evidence" value="ECO:0007669"/>
    <property type="project" value="UniProtKB-UniRule"/>
</dbReference>
<dbReference type="CDD" id="cd02022">
    <property type="entry name" value="DPCK"/>
    <property type="match status" value="1"/>
</dbReference>
<dbReference type="FunFam" id="3.40.50.300:FF:000518">
    <property type="entry name" value="Dephospho-CoA kinase"/>
    <property type="match status" value="1"/>
</dbReference>
<dbReference type="Gene3D" id="3.40.50.300">
    <property type="entry name" value="P-loop containing nucleotide triphosphate hydrolases"/>
    <property type="match status" value="1"/>
</dbReference>
<dbReference type="HAMAP" id="MF_00376">
    <property type="entry name" value="Dephospho_CoA_kinase"/>
    <property type="match status" value="1"/>
</dbReference>
<dbReference type="InterPro" id="IPR001977">
    <property type="entry name" value="Depp_CoAkinase"/>
</dbReference>
<dbReference type="InterPro" id="IPR027417">
    <property type="entry name" value="P-loop_NTPase"/>
</dbReference>
<dbReference type="NCBIfam" id="TIGR00152">
    <property type="entry name" value="dephospho-CoA kinase"/>
    <property type="match status" value="1"/>
</dbReference>
<dbReference type="PANTHER" id="PTHR10695:SF46">
    <property type="entry name" value="BIFUNCTIONAL COENZYME A SYNTHASE-RELATED"/>
    <property type="match status" value="1"/>
</dbReference>
<dbReference type="PANTHER" id="PTHR10695">
    <property type="entry name" value="DEPHOSPHO-COA KINASE-RELATED"/>
    <property type="match status" value="1"/>
</dbReference>
<dbReference type="Pfam" id="PF01121">
    <property type="entry name" value="CoaE"/>
    <property type="match status" value="1"/>
</dbReference>
<dbReference type="SUPFAM" id="SSF52540">
    <property type="entry name" value="P-loop containing nucleoside triphosphate hydrolases"/>
    <property type="match status" value="1"/>
</dbReference>
<dbReference type="PROSITE" id="PS51219">
    <property type="entry name" value="DPCK"/>
    <property type="match status" value="1"/>
</dbReference>
<organism>
    <name type="scientific">Mannheimia succiniciproducens (strain KCTC 0769BP / MBEL55E)</name>
    <dbReference type="NCBI Taxonomy" id="221988"/>
    <lineage>
        <taxon>Bacteria</taxon>
        <taxon>Pseudomonadati</taxon>
        <taxon>Pseudomonadota</taxon>
        <taxon>Gammaproteobacteria</taxon>
        <taxon>Pasteurellales</taxon>
        <taxon>Pasteurellaceae</taxon>
        <taxon>Basfia</taxon>
    </lineage>
</organism>